<dbReference type="EC" id="4.1.2.48"/>
<dbReference type="EMBL" id="AB001577">
    <property type="protein sequence ID" value="BAA24794.1"/>
    <property type="molecule type" value="Genomic_DNA"/>
</dbReference>
<dbReference type="SMR" id="O50584"/>
<dbReference type="BRENDA" id="4.1.2.48">
    <property type="organism ID" value="5085"/>
</dbReference>
<dbReference type="GO" id="GO:0008732">
    <property type="term" value="F:L-allo-threonine aldolase activity"/>
    <property type="evidence" value="ECO:0007669"/>
    <property type="project" value="RHEA"/>
</dbReference>
<dbReference type="GO" id="GO:0006567">
    <property type="term" value="P:threonine catabolic process"/>
    <property type="evidence" value="ECO:0007669"/>
    <property type="project" value="InterPro"/>
</dbReference>
<dbReference type="CDD" id="cd06502">
    <property type="entry name" value="TA_like"/>
    <property type="match status" value="1"/>
</dbReference>
<dbReference type="FunFam" id="3.40.640.10:FF:000087">
    <property type="entry name" value="L-threonine aldolase"/>
    <property type="match status" value="1"/>
</dbReference>
<dbReference type="FunFam" id="3.90.1150.10:FF:000069">
    <property type="entry name" value="L-threonine aldolase"/>
    <property type="match status" value="1"/>
</dbReference>
<dbReference type="Gene3D" id="3.90.1150.10">
    <property type="entry name" value="Aspartate Aminotransferase, domain 1"/>
    <property type="match status" value="1"/>
</dbReference>
<dbReference type="Gene3D" id="3.40.640.10">
    <property type="entry name" value="Type I PLP-dependent aspartate aminotransferase-like (Major domain)"/>
    <property type="match status" value="1"/>
</dbReference>
<dbReference type="InterPro" id="IPR001597">
    <property type="entry name" value="ArAA_b-elim_lyase/Thr_aldolase"/>
</dbReference>
<dbReference type="InterPro" id="IPR026273">
    <property type="entry name" value="Low_specificity_L-TA_bact"/>
</dbReference>
<dbReference type="InterPro" id="IPR015424">
    <property type="entry name" value="PyrdxlP-dep_Trfase"/>
</dbReference>
<dbReference type="InterPro" id="IPR015421">
    <property type="entry name" value="PyrdxlP-dep_Trfase_major"/>
</dbReference>
<dbReference type="InterPro" id="IPR015422">
    <property type="entry name" value="PyrdxlP-dep_Trfase_small"/>
</dbReference>
<dbReference type="PANTHER" id="PTHR48097">
    <property type="entry name" value="L-THREONINE ALDOLASE-RELATED"/>
    <property type="match status" value="1"/>
</dbReference>
<dbReference type="PANTHER" id="PTHR48097:SF5">
    <property type="entry name" value="LOW SPECIFICITY L-THREONINE ALDOLASE"/>
    <property type="match status" value="1"/>
</dbReference>
<dbReference type="Pfam" id="PF01212">
    <property type="entry name" value="Beta_elim_lyase"/>
    <property type="match status" value="1"/>
</dbReference>
<dbReference type="PIRSF" id="PIRSF038940">
    <property type="entry name" value="Low_specificity_LTA"/>
    <property type="match status" value="1"/>
</dbReference>
<dbReference type="SUPFAM" id="SSF53383">
    <property type="entry name" value="PLP-dependent transferases"/>
    <property type="match status" value="1"/>
</dbReference>
<name>LTAE_PSEUN</name>
<reference key="1">
    <citation type="journal article" date="1998" name="Appl. Environ. Microbiol.">
        <title>Gene cloning, nucleotide sequencing, and purification and characterization of the low-specificity L-threonine aldolase from Pseudomonas sp. strain NCIMB 10558.</title>
        <authorList>
            <person name="Liu J.-Q."/>
            <person name="Ito S."/>
            <person name="Dairi T."/>
            <person name="Itoh N."/>
            <person name="Kataoka M."/>
            <person name="Shimizu S."/>
            <person name="Yamada H."/>
        </authorList>
    </citation>
    <scope>NUCLEOTIDE SEQUENCE [GENOMIC DNA]</scope>
    <scope>PROTEIN SEQUENCE OF N-TERMINUS</scope>
    <scope>MUTAGENESIS OF LYS-207</scope>
    <scope>CHARACTERIZATION</scope>
</reference>
<gene>
    <name type="primary">ltaE</name>
    <name type="synonym">ltaP</name>
</gene>
<feature type="chain" id="PRO_0000121578" description="Low specificity L-threonine aldolase">
    <location>
        <begin position="1"/>
        <end position="346"/>
    </location>
</feature>
<feature type="modified residue" description="N6-(pyridoxal phosphate)lysine" evidence="2">
    <location>
        <position position="207"/>
    </location>
</feature>
<feature type="mutagenesis site" description="Loss of activity." evidence="1">
    <original>K</original>
    <variation>A</variation>
    <location>
        <position position="207"/>
    </location>
</feature>
<feature type="mutagenesis site" description="1000-fold decrease in activity." evidence="1">
    <original>K</original>
    <variation>R</variation>
    <location>
        <position position="207"/>
    </location>
</feature>
<protein>
    <recommendedName>
        <fullName>Low specificity L-threonine aldolase</fullName>
        <shortName>Low specificity L-TA</shortName>
        <ecNumber>4.1.2.48</ecNumber>
    </recommendedName>
</protein>
<organism>
    <name type="scientific">Pseudomonas sp. (strain NCIMB 10558)</name>
    <dbReference type="NCBI Taxonomy" id="268808"/>
    <lineage>
        <taxon>Bacteria</taxon>
        <taxon>Pseudomonadati</taxon>
        <taxon>Pseudomonadota</taxon>
        <taxon>Gammaproteobacteria</taxon>
        <taxon>Pseudomonadales</taxon>
        <taxon>Pseudomonadaceae</taxon>
        <taxon>Pseudomonas</taxon>
    </lineage>
</organism>
<accession>O50584</accession>
<evidence type="ECO:0000269" key="1">
    <source>
    </source>
</evidence>
<evidence type="ECO:0000305" key="2"/>
<comment type="function">
    <text>Catalyzes the cleavage of L-allo-threonine and L-threonine to glycine and acetaldehyde. Can also act on L-erythro-phenylserine, L-threo-phenylserine, L-beta-3,4-methylenedioxyphenylserine and L-beta-3,4-dihydroxyphenylserine.</text>
</comment>
<comment type="catalytic activity">
    <reaction>
        <text>L-threonine = acetaldehyde + glycine</text>
        <dbReference type="Rhea" id="RHEA:19625"/>
        <dbReference type="ChEBI" id="CHEBI:15343"/>
        <dbReference type="ChEBI" id="CHEBI:57305"/>
        <dbReference type="ChEBI" id="CHEBI:57926"/>
        <dbReference type="EC" id="4.1.2.48"/>
    </reaction>
</comment>
<comment type="catalytic activity">
    <reaction>
        <text>L-allo-threonine = acetaldehyde + glycine</text>
        <dbReference type="Rhea" id="RHEA:26209"/>
        <dbReference type="ChEBI" id="CHEBI:15343"/>
        <dbReference type="ChEBI" id="CHEBI:57305"/>
        <dbReference type="ChEBI" id="CHEBI:58585"/>
        <dbReference type="EC" id="4.1.2.48"/>
    </reaction>
</comment>
<comment type="cofactor">
    <cofactor>
        <name>pyridoxal 5'-phosphate</name>
        <dbReference type="ChEBI" id="CHEBI:597326"/>
    </cofactor>
</comment>
<comment type="biophysicochemical properties">
    <phDependence>
        <text>Optimum pH is 8.0-8.5.</text>
    </phDependence>
    <temperatureDependence>
        <text>Optimum temperature is 25 degrees Celsius.</text>
    </temperatureDependence>
</comment>
<comment type="subunit">
    <text evidence="2">Homotetramer.</text>
</comment>
<comment type="similarity">
    <text evidence="2">Belongs to the threonine aldolase family.</text>
</comment>
<sequence length="346" mass="37948">MTDQSQQFASDNYSGICPEAWAAMEKANHGHERAYGDDQWTARAADHFRKLFETDCEVFFAFNGTAANSLALSSLCQSYHSVICSETAHVETDECGAPEFFSNGSKLLTARSEGGKLTPASIREVALKRQDIHYPKPRVVTITQATEVGSVYRPDELKAISATCKELGLNLHMDGARFSNACAFLGCTPAELTWKAGIDVLCFGGTKNGMAVGEAILFFNRKLAEDFDYRCKQAGQLASKMRFLSAPWVGLLEDGAWLRHAAHANHCAQLLSSLVADIPGVELMFPVEANGVFLQMSEPALEALRNKGWRFYTFIGSGGARFMCSWDTEEARVRELAADIRAVMSA</sequence>
<keyword id="KW-0903">Direct protein sequencing</keyword>
<keyword id="KW-0456">Lyase</keyword>
<keyword id="KW-0663">Pyridoxal phosphate</keyword>
<proteinExistence type="evidence at protein level"/>